<comment type="function">
    <text evidence="1">Part of a sulfur-relay system required for 2-thiolation of 5-methylaminomethyl-2-thiouridine (mnm(5)s(2)U) at tRNA wobble positions.</text>
</comment>
<comment type="subunit">
    <text evidence="1">Heterohexamer, formed by a dimer of trimers. The hexameric TusBCD complex contains 2 copies each of TusB, TusC and TusD. The TusBCD complex interacts with TusE.</text>
</comment>
<comment type="subcellular location">
    <subcellularLocation>
        <location evidence="1">Cytoplasm</location>
    </subcellularLocation>
</comment>
<comment type="similarity">
    <text evidence="1">Belongs to the DsrH/TusB family.</text>
</comment>
<keyword id="KW-0963">Cytoplasm</keyword>
<keyword id="KW-1185">Reference proteome</keyword>
<keyword id="KW-0819">tRNA processing</keyword>
<dbReference type="EMBL" id="CU468135">
    <property type="protein sequence ID" value="CAO98216.1"/>
    <property type="molecule type" value="Genomic_DNA"/>
</dbReference>
<dbReference type="RefSeq" id="WP_012442848.1">
    <property type="nucleotide sequence ID" value="NC_010694.1"/>
</dbReference>
<dbReference type="SMR" id="B2VK39"/>
<dbReference type="STRING" id="465817.ETA_31700"/>
<dbReference type="KEGG" id="eta:ETA_31700"/>
<dbReference type="eggNOG" id="COG2168">
    <property type="taxonomic scope" value="Bacteria"/>
</dbReference>
<dbReference type="HOGENOM" id="CLU_166087_2_1_6"/>
<dbReference type="OrthoDB" id="9795117at2"/>
<dbReference type="Proteomes" id="UP000001726">
    <property type="component" value="Chromosome"/>
</dbReference>
<dbReference type="GO" id="GO:1990228">
    <property type="term" value="C:sulfurtransferase complex"/>
    <property type="evidence" value="ECO:0007669"/>
    <property type="project" value="TreeGrafter"/>
</dbReference>
<dbReference type="GO" id="GO:0002143">
    <property type="term" value="P:tRNA wobble position uridine thiolation"/>
    <property type="evidence" value="ECO:0007669"/>
    <property type="project" value="InterPro"/>
</dbReference>
<dbReference type="Gene3D" id="3.40.1260.10">
    <property type="entry name" value="DsrEFH-like"/>
    <property type="match status" value="1"/>
</dbReference>
<dbReference type="HAMAP" id="MF_01564">
    <property type="entry name" value="Thiourid_synth_B"/>
    <property type="match status" value="1"/>
</dbReference>
<dbReference type="InterPro" id="IPR027396">
    <property type="entry name" value="DsrEFH-like"/>
</dbReference>
<dbReference type="InterPro" id="IPR023526">
    <property type="entry name" value="Sulphur_relay_TusB"/>
</dbReference>
<dbReference type="InterPro" id="IPR007215">
    <property type="entry name" value="Sulphur_relay_TusB/DsrH"/>
</dbReference>
<dbReference type="NCBIfam" id="NF010035">
    <property type="entry name" value="PRK13510.1"/>
    <property type="match status" value="1"/>
</dbReference>
<dbReference type="NCBIfam" id="TIGR03011">
    <property type="entry name" value="sulf_tusB_dsrH"/>
    <property type="match status" value="1"/>
</dbReference>
<dbReference type="PANTHER" id="PTHR37526">
    <property type="entry name" value="PROTEIN TUSB"/>
    <property type="match status" value="1"/>
</dbReference>
<dbReference type="PANTHER" id="PTHR37526:SF1">
    <property type="entry name" value="PROTEIN TUSB"/>
    <property type="match status" value="1"/>
</dbReference>
<dbReference type="Pfam" id="PF04077">
    <property type="entry name" value="DsrH"/>
    <property type="match status" value="1"/>
</dbReference>
<dbReference type="SUPFAM" id="SSF75169">
    <property type="entry name" value="DsrEFH-like"/>
    <property type="match status" value="1"/>
</dbReference>
<feature type="chain" id="PRO_1000147183" description="Protein TusB">
    <location>
        <begin position="1"/>
        <end position="95"/>
    </location>
</feature>
<accession>B2VK39</accession>
<organism>
    <name type="scientific">Erwinia tasmaniensis (strain DSM 17950 / CFBP 7177 / CIP 109463 / NCPPB 4357 / Et1/99)</name>
    <dbReference type="NCBI Taxonomy" id="465817"/>
    <lineage>
        <taxon>Bacteria</taxon>
        <taxon>Pseudomonadati</taxon>
        <taxon>Pseudomonadota</taxon>
        <taxon>Gammaproteobacteria</taxon>
        <taxon>Enterobacterales</taxon>
        <taxon>Erwiniaceae</taxon>
        <taxon>Erwinia</taxon>
    </lineage>
</organism>
<sequence>MLHTLMTSPFRCDLSAILRLLAAGDDVLLLQDGVIAALDGSAPLEALLKAPINLYVLKEDLEARGLLAQISPRATVVGYTDFIQLAVRNPQQMAW</sequence>
<gene>
    <name evidence="1" type="primary">tusB</name>
    <name type="ordered locus">ETA_31700</name>
</gene>
<evidence type="ECO:0000255" key="1">
    <source>
        <dbReference type="HAMAP-Rule" id="MF_01564"/>
    </source>
</evidence>
<reference key="1">
    <citation type="journal article" date="2008" name="Environ. Microbiol.">
        <title>The genome of Erwinia tasmaniensis strain Et1/99, a non-pathogenic bacterium in the genus Erwinia.</title>
        <authorList>
            <person name="Kube M."/>
            <person name="Migdoll A.M."/>
            <person name="Mueller I."/>
            <person name="Kuhl H."/>
            <person name="Beck A."/>
            <person name="Reinhardt R."/>
            <person name="Geider K."/>
        </authorList>
    </citation>
    <scope>NUCLEOTIDE SEQUENCE [LARGE SCALE GENOMIC DNA]</scope>
    <source>
        <strain>DSM 17950 / CFBP 7177 / CIP 109463 / NCPPB 4357 / Et1/99</strain>
    </source>
</reference>
<proteinExistence type="inferred from homology"/>
<protein>
    <recommendedName>
        <fullName evidence="1">Protein TusB</fullName>
    </recommendedName>
    <alternativeName>
        <fullName evidence="1">tRNA 2-thiouridine synthesizing protein B</fullName>
    </alternativeName>
</protein>
<name>TUSB_ERWT9</name>